<dbReference type="EMBL" id="CP001184">
    <property type="protein sequence ID" value="ACI59780.1"/>
    <property type="molecule type" value="Genomic_DNA"/>
</dbReference>
<dbReference type="RefSeq" id="WP_004026006.1">
    <property type="nucleotide sequence ID" value="NC_011374.1"/>
</dbReference>
<dbReference type="SMR" id="B5ZB65"/>
<dbReference type="STRING" id="565575.UUR10_0251"/>
<dbReference type="GeneID" id="93848731"/>
<dbReference type="KEGG" id="uue:UUR10_0251"/>
<dbReference type="eggNOG" id="COG0100">
    <property type="taxonomic scope" value="Bacteria"/>
</dbReference>
<dbReference type="HOGENOM" id="CLU_072439_5_0_14"/>
<dbReference type="OrthoDB" id="9806415at2"/>
<dbReference type="Proteomes" id="UP000002018">
    <property type="component" value="Chromosome"/>
</dbReference>
<dbReference type="GO" id="GO:1990904">
    <property type="term" value="C:ribonucleoprotein complex"/>
    <property type="evidence" value="ECO:0007669"/>
    <property type="project" value="UniProtKB-KW"/>
</dbReference>
<dbReference type="GO" id="GO:0005840">
    <property type="term" value="C:ribosome"/>
    <property type="evidence" value="ECO:0007669"/>
    <property type="project" value="UniProtKB-KW"/>
</dbReference>
<dbReference type="GO" id="GO:0019843">
    <property type="term" value="F:rRNA binding"/>
    <property type="evidence" value="ECO:0007669"/>
    <property type="project" value="UniProtKB-UniRule"/>
</dbReference>
<dbReference type="GO" id="GO:0003735">
    <property type="term" value="F:structural constituent of ribosome"/>
    <property type="evidence" value="ECO:0007669"/>
    <property type="project" value="InterPro"/>
</dbReference>
<dbReference type="GO" id="GO:0006412">
    <property type="term" value="P:translation"/>
    <property type="evidence" value="ECO:0007669"/>
    <property type="project" value="UniProtKB-UniRule"/>
</dbReference>
<dbReference type="FunFam" id="3.30.420.80:FF:000010">
    <property type="entry name" value="30S ribosomal protein S11"/>
    <property type="match status" value="1"/>
</dbReference>
<dbReference type="Gene3D" id="3.30.420.80">
    <property type="entry name" value="Ribosomal protein S11"/>
    <property type="match status" value="1"/>
</dbReference>
<dbReference type="HAMAP" id="MF_01310">
    <property type="entry name" value="Ribosomal_uS11"/>
    <property type="match status" value="1"/>
</dbReference>
<dbReference type="InterPro" id="IPR001971">
    <property type="entry name" value="Ribosomal_uS11"/>
</dbReference>
<dbReference type="InterPro" id="IPR019981">
    <property type="entry name" value="Ribosomal_uS11_bac-type"/>
</dbReference>
<dbReference type="InterPro" id="IPR018102">
    <property type="entry name" value="Ribosomal_uS11_CS"/>
</dbReference>
<dbReference type="InterPro" id="IPR036967">
    <property type="entry name" value="Ribosomal_uS11_sf"/>
</dbReference>
<dbReference type="NCBIfam" id="NF003698">
    <property type="entry name" value="PRK05309.1"/>
    <property type="match status" value="1"/>
</dbReference>
<dbReference type="NCBIfam" id="TIGR03632">
    <property type="entry name" value="uS11_bact"/>
    <property type="match status" value="1"/>
</dbReference>
<dbReference type="PANTHER" id="PTHR11759">
    <property type="entry name" value="40S RIBOSOMAL PROTEIN S14/30S RIBOSOMAL PROTEIN S11"/>
    <property type="match status" value="1"/>
</dbReference>
<dbReference type="Pfam" id="PF00411">
    <property type="entry name" value="Ribosomal_S11"/>
    <property type="match status" value="1"/>
</dbReference>
<dbReference type="PIRSF" id="PIRSF002131">
    <property type="entry name" value="Ribosomal_S11"/>
    <property type="match status" value="1"/>
</dbReference>
<dbReference type="SUPFAM" id="SSF53137">
    <property type="entry name" value="Translational machinery components"/>
    <property type="match status" value="1"/>
</dbReference>
<dbReference type="PROSITE" id="PS00054">
    <property type="entry name" value="RIBOSOMAL_S11"/>
    <property type="match status" value="1"/>
</dbReference>
<protein>
    <recommendedName>
        <fullName evidence="1">Small ribosomal subunit protein uS11</fullName>
    </recommendedName>
    <alternativeName>
        <fullName evidence="2">30S ribosomal protein S11</fullName>
    </alternativeName>
</protein>
<feature type="chain" id="PRO_1000141155" description="Small ribosomal subunit protein uS11">
    <location>
        <begin position="1"/>
        <end position="121"/>
    </location>
</feature>
<sequence length="121" mass="12703">MAKKKKLSFTNGIAYIHATKNNTIITLADEQGSVLSWASSGSIGYKGTKKKTPYSAGIAAEAAAKAVIDMGLKSVEVHVNGTGASRDTAIRSLQAAGLEVTKIKDVTPIPHNGCRPPKKPR</sequence>
<accession>B5ZB65</accession>
<organism>
    <name type="scientific">Ureaplasma urealyticum serovar 10 (strain ATCC 33699 / Western)</name>
    <dbReference type="NCBI Taxonomy" id="565575"/>
    <lineage>
        <taxon>Bacteria</taxon>
        <taxon>Bacillati</taxon>
        <taxon>Mycoplasmatota</taxon>
        <taxon>Mycoplasmoidales</taxon>
        <taxon>Mycoplasmoidaceae</taxon>
        <taxon>Ureaplasma</taxon>
    </lineage>
</organism>
<comment type="function">
    <text evidence="1">Located on the platform of the 30S subunit, it bridges several disparate RNA helices of the 16S rRNA. Forms part of the Shine-Dalgarno cleft in the 70S ribosome.</text>
</comment>
<comment type="subunit">
    <text evidence="1">Part of the 30S ribosomal subunit. Interacts with proteins S7 and S18. Binds to IF-3.</text>
</comment>
<comment type="similarity">
    <text evidence="1">Belongs to the universal ribosomal protein uS11 family.</text>
</comment>
<reference key="1">
    <citation type="submission" date="2008-10" db="EMBL/GenBank/DDBJ databases">
        <title>Genome sequence of Ureaplasma urealyticum serovar 10 ATCC-33699.</title>
        <authorList>
            <person name="Shrivastava S."/>
            <person name="Methe B.A."/>
            <person name="Glass J."/>
            <person name="White K."/>
            <person name="Duffy L.B."/>
        </authorList>
    </citation>
    <scope>NUCLEOTIDE SEQUENCE [LARGE SCALE GENOMIC DNA]</scope>
    <source>
        <strain>ATCC 33699 / Western</strain>
    </source>
</reference>
<gene>
    <name evidence="1" type="primary">rpsK</name>
    <name type="ordered locus">UUR10_0251</name>
</gene>
<keyword id="KW-0687">Ribonucleoprotein</keyword>
<keyword id="KW-0689">Ribosomal protein</keyword>
<keyword id="KW-0694">RNA-binding</keyword>
<keyword id="KW-0699">rRNA-binding</keyword>
<proteinExistence type="inferred from homology"/>
<name>RS11_UREU1</name>
<evidence type="ECO:0000255" key="1">
    <source>
        <dbReference type="HAMAP-Rule" id="MF_01310"/>
    </source>
</evidence>
<evidence type="ECO:0000305" key="2"/>